<organism>
    <name type="scientific">Lactococcus lactis subsp. lactis (strain IL1403)</name>
    <name type="common">Streptococcus lactis</name>
    <dbReference type="NCBI Taxonomy" id="272623"/>
    <lineage>
        <taxon>Bacteria</taxon>
        <taxon>Bacillati</taxon>
        <taxon>Bacillota</taxon>
        <taxon>Bacilli</taxon>
        <taxon>Lactobacillales</taxon>
        <taxon>Streptococcaceae</taxon>
        <taxon>Lactococcus</taxon>
    </lineage>
</organism>
<name>TGT_LACLA</name>
<feature type="chain" id="PRO_0000135486" description="Queuine tRNA-ribosyltransferase">
    <location>
        <begin position="1"/>
        <end position="382"/>
    </location>
</feature>
<feature type="region of interest" description="RNA binding" evidence="1">
    <location>
        <begin position="252"/>
        <end position="258"/>
    </location>
</feature>
<feature type="region of interest" description="RNA binding; important for wobble base 34 recognition" evidence="1">
    <location>
        <begin position="276"/>
        <end position="280"/>
    </location>
</feature>
<feature type="active site" description="Proton acceptor" evidence="1">
    <location>
        <position position="96"/>
    </location>
</feature>
<feature type="active site" description="Nucleophile" evidence="1">
    <location>
        <position position="271"/>
    </location>
</feature>
<feature type="binding site" evidence="1">
    <location>
        <begin position="96"/>
        <end position="100"/>
    </location>
    <ligand>
        <name>substrate</name>
    </ligand>
</feature>
<feature type="binding site" evidence="1">
    <location>
        <position position="151"/>
    </location>
    <ligand>
        <name>substrate</name>
    </ligand>
</feature>
<feature type="binding site" evidence="1">
    <location>
        <position position="194"/>
    </location>
    <ligand>
        <name>substrate</name>
    </ligand>
</feature>
<feature type="binding site" evidence="1">
    <location>
        <position position="221"/>
    </location>
    <ligand>
        <name>substrate</name>
    </ligand>
</feature>
<feature type="binding site" evidence="1">
    <location>
        <position position="309"/>
    </location>
    <ligand>
        <name>Zn(2+)</name>
        <dbReference type="ChEBI" id="CHEBI:29105"/>
    </ligand>
</feature>
<feature type="binding site" evidence="1">
    <location>
        <position position="311"/>
    </location>
    <ligand>
        <name>Zn(2+)</name>
        <dbReference type="ChEBI" id="CHEBI:29105"/>
    </ligand>
</feature>
<feature type="binding site" evidence="1">
    <location>
        <position position="314"/>
    </location>
    <ligand>
        <name>Zn(2+)</name>
        <dbReference type="ChEBI" id="CHEBI:29105"/>
    </ligand>
</feature>
<feature type="binding site" evidence="1">
    <location>
        <position position="340"/>
    </location>
    <ligand>
        <name>Zn(2+)</name>
        <dbReference type="ChEBI" id="CHEBI:29105"/>
    </ligand>
</feature>
<reference key="1">
    <citation type="journal article" date="2001" name="Genome Res.">
        <title>The complete genome sequence of the lactic acid bacterium Lactococcus lactis ssp. lactis IL1403.</title>
        <authorList>
            <person name="Bolotin A."/>
            <person name="Wincker P."/>
            <person name="Mauger S."/>
            <person name="Jaillon O."/>
            <person name="Malarme K."/>
            <person name="Weissenbach J."/>
            <person name="Ehrlich S.D."/>
            <person name="Sorokin A."/>
        </authorList>
    </citation>
    <scope>NUCLEOTIDE SEQUENCE [LARGE SCALE GENOMIC DNA]</scope>
    <source>
        <strain>IL1403</strain>
    </source>
</reference>
<comment type="function">
    <text evidence="1">Catalyzes the base-exchange of a guanine (G) residue with the queuine precursor 7-aminomethyl-7-deazaguanine (PreQ1) at position 34 (anticodon wobble position) in tRNAs with GU(N) anticodons (tRNA-Asp, -Asn, -His and -Tyr). Catalysis occurs through a double-displacement mechanism. The nucleophile active site attacks the C1' of nucleotide 34 to detach the guanine base from the RNA, forming a covalent enzyme-RNA intermediate. The proton acceptor active site deprotonates the incoming PreQ1, allowing a nucleophilic attack on the C1' of the ribose to form the product. After dissociation, two additional enzymatic reactions on the tRNA convert PreQ1 to queuine (Q), resulting in the hypermodified nucleoside queuosine (7-(((4,5-cis-dihydroxy-2-cyclopenten-1-yl)amino)methyl)-7-deazaguanosine).</text>
</comment>
<comment type="catalytic activity">
    <reaction evidence="1">
        <text>7-aminomethyl-7-carbaguanine + guanosine(34) in tRNA = 7-aminomethyl-7-carbaguanosine(34) in tRNA + guanine</text>
        <dbReference type="Rhea" id="RHEA:24104"/>
        <dbReference type="Rhea" id="RHEA-COMP:10341"/>
        <dbReference type="Rhea" id="RHEA-COMP:10342"/>
        <dbReference type="ChEBI" id="CHEBI:16235"/>
        <dbReference type="ChEBI" id="CHEBI:58703"/>
        <dbReference type="ChEBI" id="CHEBI:74269"/>
        <dbReference type="ChEBI" id="CHEBI:82833"/>
        <dbReference type="EC" id="2.4.2.29"/>
    </reaction>
</comment>
<comment type="cofactor">
    <cofactor evidence="1">
        <name>Zn(2+)</name>
        <dbReference type="ChEBI" id="CHEBI:29105"/>
    </cofactor>
    <text evidence="1">Binds 1 zinc ion per subunit.</text>
</comment>
<comment type="pathway">
    <text evidence="1">tRNA modification; tRNA-queuosine biosynthesis.</text>
</comment>
<comment type="subunit">
    <text evidence="1">Homodimer. Within each dimer, one monomer is responsible for RNA recognition and catalysis, while the other monomer binds to the replacement base PreQ1.</text>
</comment>
<comment type="similarity">
    <text evidence="1">Belongs to the queuine tRNA-ribosyltransferase family.</text>
</comment>
<sequence>MTEHAIKYRLIKKEKHTGARLGEIITPHGTFPTPMFMPVGTQATVKTMSPEELKTLGSGIILSNTYHLWLRPGDELVAEAGGLHKFMNWDQPILTDSGGFQVYSLVQNKKNITEEGVKFKSHLDGRELFLNPEKAISIQNNLGSDIMMSFDECPPFYQPYDYVKASVERTSRWAERGLNAHRRPNDQGLFGIVQGAGFEDLRRQSARDLTSMDFAGYSIGGLAVGESHKEMNAVLDFTTPMLPEDKPRYLMGVGAPDSLIDGVIRGVDMFDCVLPTRIARNGTLMTHFGRVNIRNAKYEHDFTPLDPMCDCYTCTNYTRAYLRHLIKADETFGLRLCSYHNLHFLVNLMKDVRGAIMDDNLLEFREDFCERYGYNQPNAKDF</sequence>
<evidence type="ECO:0000255" key="1">
    <source>
        <dbReference type="HAMAP-Rule" id="MF_00168"/>
    </source>
</evidence>
<protein>
    <recommendedName>
        <fullName evidence="1">Queuine tRNA-ribosyltransferase</fullName>
        <ecNumber evidence="1">2.4.2.29</ecNumber>
    </recommendedName>
    <alternativeName>
        <fullName evidence="1">Guanine insertion enzyme</fullName>
    </alternativeName>
    <alternativeName>
        <fullName evidence="1">tRNA-guanine transglycosylase</fullName>
    </alternativeName>
</protein>
<keyword id="KW-0328">Glycosyltransferase</keyword>
<keyword id="KW-0479">Metal-binding</keyword>
<keyword id="KW-0671">Queuosine biosynthesis</keyword>
<keyword id="KW-1185">Reference proteome</keyword>
<keyword id="KW-0808">Transferase</keyword>
<keyword id="KW-0819">tRNA processing</keyword>
<keyword id="KW-0862">Zinc</keyword>
<accession>Q9CJ54</accession>
<gene>
    <name evidence="1" type="primary">tgt</name>
    <name type="ordered locus">LL0152</name>
    <name type="ORF">L0361</name>
</gene>
<proteinExistence type="inferred from homology"/>
<dbReference type="EC" id="2.4.2.29" evidence="1"/>
<dbReference type="EMBL" id="AE005176">
    <property type="protein sequence ID" value="AAK04250.1"/>
    <property type="molecule type" value="Genomic_DNA"/>
</dbReference>
<dbReference type="PIR" id="H86643">
    <property type="entry name" value="H86643"/>
</dbReference>
<dbReference type="RefSeq" id="NP_266308.1">
    <property type="nucleotide sequence ID" value="NC_002662.1"/>
</dbReference>
<dbReference type="RefSeq" id="WP_003129711.1">
    <property type="nucleotide sequence ID" value="NC_002662.1"/>
</dbReference>
<dbReference type="SMR" id="Q9CJ54"/>
<dbReference type="PaxDb" id="272623-L0361"/>
<dbReference type="EnsemblBacteria" id="AAK04250">
    <property type="protein sequence ID" value="AAK04250"/>
    <property type="gene ID" value="L0361"/>
</dbReference>
<dbReference type="KEGG" id="lla:L0361"/>
<dbReference type="PATRIC" id="fig|272623.7.peg.170"/>
<dbReference type="eggNOG" id="COG0343">
    <property type="taxonomic scope" value="Bacteria"/>
</dbReference>
<dbReference type="HOGENOM" id="CLU_022060_0_1_9"/>
<dbReference type="OrthoDB" id="9805417at2"/>
<dbReference type="UniPathway" id="UPA00392"/>
<dbReference type="Proteomes" id="UP000002196">
    <property type="component" value="Chromosome"/>
</dbReference>
<dbReference type="GO" id="GO:0005829">
    <property type="term" value="C:cytosol"/>
    <property type="evidence" value="ECO:0007669"/>
    <property type="project" value="TreeGrafter"/>
</dbReference>
<dbReference type="GO" id="GO:0046872">
    <property type="term" value="F:metal ion binding"/>
    <property type="evidence" value="ECO:0007669"/>
    <property type="project" value="UniProtKB-KW"/>
</dbReference>
<dbReference type="GO" id="GO:0008479">
    <property type="term" value="F:tRNA-guanosine(34) queuine transglycosylase activity"/>
    <property type="evidence" value="ECO:0007669"/>
    <property type="project" value="UniProtKB-UniRule"/>
</dbReference>
<dbReference type="GO" id="GO:0008616">
    <property type="term" value="P:queuosine biosynthetic process"/>
    <property type="evidence" value="ECO:0007669"/>
    <property type="project" value="UniProtKB-UniRule"/>
</dbReference>
<dbReference type="GO" id="GO:0002099">
    <property type="term" value="P:tRNA wobble guanine modification"/>
    <property type="evidence" value="ECO:0007669"/>
    <property type="project" value="TreeGrafter"/>
</dbReference>
<dbReference type="GO" id="GO:0101030">
    <property type="term" value="P:tRNA-guanine transglycosylation"/>
    <property type="evidence" value="ECO:0007669"/>
    <property type="project" value="InterPro"/>
</dbReference>
<dbReference type="FunFam" id="3.20.20.105:FF:000001">
    <property type="entry name" value="Queuine tRNA-ribosyltransferase"/>
    <property type="match status" value="1"/>
</dbReference>
<dbReference type="Gene3D" id="3.20.20.105">
    <property type="entry name" value="Queuine tRNA-ribosyltransferase-like"/>
    <property type="match status" value="1"/>
</dbReference>
<dbReference type="HAMAP" id="MF_00168">
    <property type="entry name" value="Q_tRNA_Tgt"/>
    <property type="match status" value="1"/>
</dbReference>
<dbReference type="InterPro" id="IPR050076">
    <property type="entry name" value="ArchSynthase1/Queuine_TRR"/>
</dbReference>
<dbReference type="InterPro" id="IPR004803">
    <property type="entry name" value="TGT"/>
</dbReference>
<dbReference type="InterPro" id="IPR036511">
    <property type="entry name" value="TGT-like_sf"/>
</dbReference>
<dbReference type="InterPro" id="IPR002616">
    <property type="entry name" value="tRNA_ribo_trans-like"/>
</dbReference>
<dbReference type="NCBIfam" id="TIGR00430">
    <property type="entry name" value="Q_tRNA_tgt"/>
    <property type="match status" value="1"/>
</dbReference>
<dbReference type="NCBIfam" id="TIGR00449">
    <property type="entry name" value="tgt_general"/>
    <property type="match status" value="1"/>
</dbReference>
<dbReference type="PANTHER" id="PTHR46499">
    <property type="entry name" value="QUEUINE TRNA-RIBOSYLTRANSFERASE"/>
    <property type="match status" value="1"/>
</dbReference>
<dbReference type="PANTHER" id="PTHR46499:SF1">
    <property type="entry name" value="QUEUINE TRNA-RIBOSYLTRANSFERASE"/>
    <property type="match status" value="1"/>
</dbReference>
<dbReference type="Pfam" id="PF01702">
    <property type="entry name" value="TGT"/>
    <property type="match status" value="1"/>
</dbReference>
<dbReference type="SUPFAM" id="SSF51713">
    <property type="entry name" value="tRNA-guanine transglycosylase"/>
    <property type="match status" value="1"/>
</dbReference>